<organismHost>
    <name type="scientific">Brassicaceae</name>
    <dbReference type="NCBI Taxonomy" id="3700"/>
</organismHost>
<dbReference type="EMBL" id="U03387">
    <property type="protein sequence ID" value="AAC02784.1"/>
    <property type="molecule type" value="Genomic_RNA"/>
</dbReference>
<dbReference type="RefSeq" id="NP_046153.1">
    <property type="nucleotide sequence ID" value="NC_001873.1"/>
</dbReference>
<dbReference type="KEGG" id="vg:1494924"/>
<dbReference type="OrthoDB" id="8677at10239"/>
<dbReference type="Proteomes" id="UP000008264">
    <property type="component" value="Genome"/>
</dbReference>
<dbReference type="GO" id="GO:0030430">
    <property type="term" value="C:host cell cytoplasm"/>
    <property type="evidence" value="ECO:0007669"/>
    <property type="project" value="UniProtKB-KW"/>
</dbReference>
<dbReference type="GO" id="GO:0044219">
    <property type="term" value="C:host cell plasmodesma"/>
    <property type="evidence" value="ECO:0007669"/>
    <property type="project" value="UniProtKB-SubCell"/>
</dbReference>
<dbReference type="GO" id="GO:0044163">
    <property type="term" value="C:host cytoskeleton"/>
    <property type="evidence" value="ECO:0007669"/>
    <property type="project" value="UniProtKB-SubCell"/>
</dbReference>
<dbReference type="GO" id="GO:0003723">
    <property type="term" value="F:RNA binding"/>
    <property type="evidence" value="ECO:0007669"/>
    <property type="project" value="UniProtKB-KW"/>
</dbReference>
<dbReference type="GO" id="GO:0046740">
    <property type="term" value="P:transport of virus in host, cell to cell"/>
    <property type="evidence" value="ECO:0007669"/>
    <property type="project" value="UniProtKB-KW"/>
</dbReference>
<dbReference type="InterPro" id="IPR001022">
    <property type="entry name" value="TMV_movement"/>
</dbReference>
<dbReference type="InterPro" id="IPR028919">
    <property type="entry name" value="Viral_movement"/>
</dbReference>
<dbReference type="Pfam" id="PF01107">
    <property type="entry name" value="MP"/>
    <property type="match status" value="1"/>
</dbReference>
<dbReference type="PRINTS" id="PR00964">
    <property type="entry name" value="MOVEMENT"/>
</dbReference>
<comment type="function">
    <text evidence="1 2">Transports viral genome to neighboring plant cells directly through plasmosdesmata, without any budding. The movement protein allows efficient cell to cell propagation, by bypassing the host cell wall barrier. Forms a ribonucleoprotein complex with viral RNA. Binds microtubules and modulates microtubule stability. Can bind double-stranded DNA.</text>
</comment>
<comment type="subcellular location">
    <subcellularLocation>
        <location evidence="2">Host cytoplasm</location>
        <location evidence="2">Host cytoskeleton</location>
    </subcellularLocation>
    <subcellularLocation>
        <location evidence="2">Host cell junction</location>
        <location evidence="2">Host plasmodesma</location>
    </subcellularLocation>
</comment>
<comment type="similarity">
    <text evidence="3">Belongs to the tobamovirus movement protein family.</text>
</comment>
<name>MVP_TVCV</name>
<keyword id="KW-1031">Host cell junction</keyword>
<keyword id="KW-1035">Host cytoplasm</keyword>
<keyword id="KW-1037">Host cytoskeleton</keyword>
<keyword id="KW-0694">RNA-binding</keyword>
<keyword id="KW-0813">Transport</keyword>
<keyword id="KW-0916">Viral movement protein</keyword>
<gene>
    <name type="primary">MP</name>
</gene>
<sequence>MSIVSYEPKVSDFLNLSKKEEILPKALTRLKTVSISTKDIISVKESETLCDIDLLINVPLDKYRYVGILGAVFTGEWLVPDFVKGGVTISVIDKRLVNSKECVIGTYRAAAKSKRFQFKLVPNYFVSTVDAKRKPWQVHVRIQDLKIEAGWQPLALEVVSVAMVTNNVVMKGLREKVVAINDPDVEGFEGVVDEFVDSVAAFKAVDNFRKRKKKVEERDVVSKYKYRPEKYAGPDSFNLKEENVLQHYKPESVPVLRSGVGRAHTNA</sequence>
<accession>Q88921</accession>
<organism>
    <name type="scientific">Turnip vein-clearing virus</name>
    <name type="common">TVCV</name>
    <dbReference type="NCBI Taxonomy" id="29272"/>
    <lineage>
        <taxon>Viruses</taxon>
        <taxon>Riboviria</taxon>
        <taxon>Orthornavirae</taxon>
        <taxon>Kitrinoviricota</taxon>
        <taxon>Alsuviricetes</taxon>
        <taxon>Martellivirales</taxon>
        <taxon>Virgaviridae</taxon>
        <taxon>Tobamovirus</taxon>
    </lineage>
</organism>
<reference key="1">
    <citation type="journal article" date="1995" name="Gene">
        <title>Completion of a cDNA sequence from a tobamovirus pathogenic to crucifers.</title>
        <authorList>
            <person name="Lartey R.T."/>
            <person name="Voss T.C."/>
            <person name="Melcher U.K."/>
        </authorList>
    </citation>
    <scope>NUCLEOTIDE SEQUENCE [GENOMIC RNA]</scope>
    <source>
        <strain>OSU</strain>
    </source>
</reference>
<reference key="2">
    <citation type="journal article" date="1997" name="Gene">
        <authorList>
            <person name="Lartey R.T."/>
            <person name="Voss T.C."/>
            <person name="Melcher U.K."/>
        </authorList>
    </citation>
    <scope>ERRATUM OF PUBMED:8543186</scope>
</reference>
<evidence type="ECO:0000250" key="1">
    <source>
        <dbReference type="UniProtKB" id="P03583"/>
    </source>
</evidence>
<evidence type="ECO:0000250" key="2">
    <source>
        <dbReference type="UniProtKB" id="P69513"/>
    </source>
</evidence>
<evidence type="ECO:0000305" key="3"/>
<protein>
    <recommendedName>
        <fullName>Movement protein</fullName>
    </recommendedName>
    <alternativeName>
        <fullName>30 kDa protein</fullName>
    </alternativeName>
    <alternativeName>
        <fullName>Cell-to-cell transport protein</fullName>
    </alternativeName>
</protein>
<feature type="chain" id="PRO_0000144974" description="Movement protein">
    <location>
        <begin position="1"/>
        <end position="267"/>
    </location>
</feature>
<proteinExistence type="inferred from homology"/>